<dbReference type="EMBL" id="BC061813">
    <property type="protein sequence ID" value="AAH61813.1"/>
    <property type="molecule type" value="mRNA"/>
</dbReference>
<dbReference type="RefSeq" id="NP_001013256.1">
    <property type="nucleotide sequence ID" value="NM_001013238.1"/>
</dbReference>
<dbReference type="RefSeq" id="XP_006256315.1">
    <property type="nucleotide sequence ID" value="XM_006256253.3"/>
</dbReference>
<dbReference type="SMR" id="Q6P767"/>
<dbReference type="FunCoup" id="Q6P767">
    <property type="interactions" value="543"/>
</dbReference>
<dbReference type="STRING" id="10116.ENSRNOP00000001638"/>
<dbReference type="GlyCosmos" id="Q6P767">
    <property type="glycosylation" value="2 sites, No reported glycans"/>
</dbReference>
<dbReference type="GlyGen" id="Q6P767">
    <property type="glycosylation" value="2 sites"/>
</dbReference>
<dbReference type="iPTMnet" id="Q6P767"/>
<dbReference type="PhosphoSitePlus" id="Q6P767"/>
<dbReference type="SwissPalm" id="Q6P767"/>
<dbReference type="PaxDb" id="10116-ENSRNOP00000001638"/>
<dbReference type="Ensembl" id="ENSRNOT00000001638.6">
    <property type="protein sequence ID" value="ENSRNOP00000001638.2"/>
    <property type="gene ID" value="ENSRNOG00000001223.6"/>
</dbReference>
<dbReference type="GeneID" id="365548"/>
<dbReference type="KEGG" id="rno:365548"/>
<dbReference type="AGR" id="RGD:1305983"/>
<dbReference type="CTD" id="754"/>
<dbReference type="RGD" id="1305983">
    <property type="gene designation" value="Pttg1ip"/>
</dbReference>
<dbReference type="eggNOG" id="ENOG502RYM1">
    <property type="taxonomic scope" value="Eukaryota"/>
</dbReference>
<dbReference type="GeneTree" id="ENSGT00390000004977"/>
<dbReference type="HOGENOM" id="CLU_109415_0_0_1"/>
<dbReference type="InParanoid" id="Q6P767"/>
<dbReference type="OMA" id="CVEYPVR"/>
<dbReference type="OrthoDB" id="5829916at2759"/>
<dbReference type="PhylomeDB" id="Q6P767"/>
<dbReference type="TreeFam" id="TF329310"/>
<dbReference type="PRO" id="PR:Q6P767"/>
<dbReference type="Proteomes" id="UP000002494">
    <property type="component" value="Chromosome 20"/>
</dbReference>
<dbReference type="Bgee" id="ENSRNOG00000001223">
    <property type="expression patterns" value="Expressed in stomach and 19 other cell types or tissues"/>
</dbReference>
<dbReference type="GO" id="GO:0005737">
    <property type="term" value="C:cytoplasm"/>
    <property type="evidence" value="ECO:0000266"/>
    <property type="project" value="RGD"/>
</dbReference>
<dbReference type="GO" id="GO:0005634">
    <property type="term" value="C:nucleus"/>
    <property type="evidence" value="ECO:0000266"/>
    <property type="project" value="RGD"/>
</dbReference>
<dbReference type="GO" id="GO:0005886">
    <property type="term" value="C:plasma membrane"/>
    <property type="evidence" value="ECO:0007669"/>
    <property type="project" value="UniProtKB-SubCell"/>
</dbReference>
<dbReference type="GO" id="GO:0002039">
    <property type="term" value="F:p53 binding"/>
    <property type="evidence" value="ECO:0000266"/>
    <property type="project" value="RGD"/>
</dbReference>
<dbReference type="GO" id="GO:0043518">
    <property type="term" value="P:negative regulation of DNA damage response, signal transduction by p53 class mediator"/>
    <property type="evidence" value="ECO:0000266"/>
    <property type="project" value="RGD"/>
</dbReference>
<dbReference type="GO" id="GO:1902254">
    <property type="term" value="P:negative regulation of intrinsic apoptotic signaling pathway by p53 class mediator"/>
    <property type="evidence" value="ECO:0000266"/>
    <property type="project" value="RGD"/>
</dbReference>
<dbReference type="GO" id="GO:0031398">
    <property type="term" value="P:positive regulation of protein ubiquitination"/>
    <property type="evidence" value="ECO:0000266"/>
    <property type="project" value="RGD"/>
</dbReference>
<dbReference type="GO" id="GO:0006606">
    <property type="term" value="P:protein import into nucleus"/>
    <property type="evidence" value="ECO:0000266"/>
    <property type="project" value="RGD"/>
</dbReference>
<dbReference type="InterPro" id="IPR016201">
    <property type="entry name" value="PSI"/>
</dbReference>
<dbReference type="InterPro" id="IPR052304">
    <property type="entry name" value="PTTG1IP"/>
</dbReference>
<dbReference type="PANTHER" id="PTHR15191:SF14">
    <property type="entry name" value="PITUITARY TUMOR-TRANSFORMING GENE 1 PROTEIN-INTERACTING PROTEIN"/>
    <property type="match status" value="1"/>
</dbReference>
<dbReference type="PANTHER" id="PTHR15191">
    <property type="entry name" value="PROTEIN CBG20567"/>
    <property type="match status" value="1"/>
</dbReference>
<dbReference type="SMART" id="SM00423">
    <property type="entry name" value="PSI"/>
    <property type="match status" value="1"/>
</dbReference>
<comment type="function">
    <text evidence="1">May facilitate PTTG1 nuclear translocation.</text>
</comment>
<comment type="subunit">
    <text evidence="1">Interacts with PTTG1.</text>
</comment>
<comment type="subcellular location">
    <subcellularLocation>
        <location evidence="1">Cell membrane</location>
        <topology evidence="1">Single-pass type I membrane protein</topology>
    </subcellularLocation>
    <subcellularLocation>
        <location evidence="1">Cytoplasm</location>
    </subcellularLocation>
    <subcellularLocation>
        <location evidence="1">Nucleus</location>
    </subcellularLocation>
    <text evidence="1">May be cytoplasmic and nuclear.</text>
</comment>
<protein>
    <recommendedName>
        <fullName>Pituitary tumor-transforming gene 1 protein-interacting protein</fullName>
    </recommendedName>
    <alternativeName>
        <fullName>Pituitary tumor-transforming gene protein-binding factor</fullName>
        <shortName>PBF</shortName>
        <shortName>PTTG-binding factor</shortName>
    </alternativeName>
</protein>
<gene>
    <name type="primary">Pttg1ip</name>
</gene>
<reference key="1">
    <citation type="journal article" date="2004" name="Genome Res.">
        <title>The status, quality, and expansion of the NIH full-length cDNA project: the Mammalian Gene Collection (MGC).</title>
        <authorList>
            <consortium name="The MGC Project Team"/>
        </authorList>
    </citation>
    <scope>NUCLEOTIDE SEQUENCE [LARGE SCALE MRNA]</scope>
    <source>
        <tissue>Prostate</tissue>
    </source>
</reference>
<proteinExistence type="evidence at transcript level"/>
<accession>Q6P767</accession>
<sequence length="174" mass="19900">MASAVLGLTLRWVMFLSAVLLLLLPGASAQEPPGVGCSEYTNRSCEECLRNVSCLWCNENKACLDYPVRKILPPASLCKLSSARWGVCWVNFEALIITMSVLGGSVLLGITVCCCCCCRRKRSRKPDKSDERAMREQEERRVRQEERRAEMKSRHDEIRKKYGLFKEQNPYEKF</sequence>
<evidence type="ECO:0000250" key="1"/>
<evidence type="ECO:0000250" key="2">
    <source>
        <dbReference type="UniProtKB" id="Q8R143"/>
    </source>
</evidence>
<evidence type="ECO:0000255" key="3"/>
<evidence type="ECO:0000256" key="4">
    <source>
        <dbReference type="SAM" id="MobiDB-lite"/>
    </source>
</evidence>
<keyword id="KW-1003">Cell membrane</keyword>
<keyword id="KW-0175">Coiled coil</keyword>
<keyword id="KW-0963">Cytoplasm</keyword>
<keyword id="KW-0325">Glycoprotein</keyword>
<keyword id="KW-0472">Membrane</keyword>
<keyword id="KW-0539">Nucleus</keyword>
<keyword id="KW-0597">Phosphoprotein</keyword>
<keyword id="KW-1185">Reference proteome</keyword>
<keyword id="KW-0732">Signal</keyword>
<keyword id="KW-0812">Transmembrane</keyword>
<keyword id="KW-1133">Transmembrane helix</keyword>
<feature type="signal peptide" evidence="3">
    <location>
        <begin position="1"/>
        <end position="29"/>
    </location>
</feature>
<feature type="chain" id="PRO_0000022187" description="Pituitary tumor-transforming gene 1 protein-interacting protein">
    <location>
        <begin position="30"/>
        <end position="174"/>
    </location>
</feature>
<feature type="topological domain" description="Extracellular" evidence="3">
    <location>
        <begin position="30"/>
        <end position="93"/>
    </location>
</feature>
<feature type="transmembrane region" description="Helical" evidence="3">
    <location>
        <begin position="94"/>
        <end position="114"/>
    </location>
</feature>
<feature type="topological domain" description="Cytoplasmic" evidence="3">
    <location>
        <begin position="115"/>
        <end position="174"/>
    </location>
</feature>
<feature type="domain" description="PSI">
    <location>
        <begin position="36"/>
        <end position="89"/>
    </location>
</feature>
<feature type="region of interest" description="Disordered" evidence="4">
    <location>
        <begin position="126"/>
        <end position="155"/>
    </location>
</feature>
<feature type="coiled-coil region" evidence="3">
    <location>
        <begin position="127"/>
        <end position="163"/>
    </location>
</feature>
<feature type="modified residue" description="Phosphotyrosine" evidence="2">
    <location>
        <position position="171"/>
    </location>
</feature>
<feature type="glycosylation site" description="N-linked (GlcNAc...) asparagine" evidence="3">
    <location>
        <position position="42"/>
    </location>
</feature>
<feature type="glycosylation site" description="N-linked (GlcNAc...) asparagine" evidence="3">
    <location>
        <position position="51"/>
    </location>
</feature>
<organism>
    <name type="scientific">Rattus norvegicus</name>
    <name type="common">Rat</name>
    <dbReference type="NCBI Taxonomy" id="10116"/>
    <lineage>
        <taxon>Eukaryota</taxon>
        <taxon>Metazoa</taxon>
        <taxon>Chordata</taxon>
        <taxon>Craniata</taxon>
        <taxon>Vertebrata</taxon>
        <taxon>Euteleostomi</taxon>
        <taxon>Mammalia</taxon>
        <taxon>Eutheria</taxon>
        <taxon>Euarchontoglires</taxon>
        <taxon>Glires</taxon>
        <taxon>Rodentia</taxon>
        <taxon>Myomorpha</taxon>
        <taxon>Muroidea</taxon>
        <taxon>Muridae</taxon>
        <taxon>Murinae</taxon>
        <taxon>Rattus</taxon>
    </lineage>
</organism>
<name>PTTG_RAT</name>